<reference key="1">
    <citation type="journal article" date="1988" name="FEBS Lett.">
        <title>Complete amino acid sequence of human placental 17 beta-hydroxysteroid dehydrogenase deduced from cDNA.</title>
        <authorList>
            <person name="Peltoketo H."/>
            <person name="Isomaa V."/>
            <person name="Maeentausta O."/>
            <person name="Vihko R."/>
        </authorList>
    </citation>
    <scope>NUCLEOTIDE SEQUENCE [MRNA]</scope>
    <scope>VARIANT SER-313</scope>
    <source>
        <tissue>Placenta</tissue>
    </source>
</reference>
<reference key="2">
    <citation type="journal article" date="1989" name="Mol. Endocrinol.">
        <title>Characterization of cDNAs for human estradiol 17 beta-dehydrogenase and assignment of the gene to chromosome 17: evidence of two mRNA species with distinct 5'-termini in human placenta.</title>
        <authorList>
            <person name="Luu-The V."/>
            <person name="Labrie C."/>
            <person name="Zhao H.F."/>
            <person name="Couet J."/>
            <person name="Lachance Y."/>
            <person name="Simard J."/>
            <person name="Leblanc G."/>
            <person name="Labrie F."/>
        </authorList>
    </citation>
    <scope>NUCLEOTIDE SEQUENCE [MRNA]</scope>
    <scope>VARIANT SER-313</scope>
    <source>
        <tissue>Placenta</tissue>
    </source>
</reference>
<reference key="3">
    <citation type="journal article" date="1990" name="Mol. Endocrinol.">
        <title>Structure of two in tandem human 17 beta-hydroxysteroid dehydrogenase genes.</title>
        <authorList>
            <person name="Luu-The V."/>
            <person name="Labrie C."/>
            <person name="Simard J."/>
            <person name="Lachance Y."/>
            <person name="Zhao H.F."/>
            <person name="Couet J."/>
            <person name="Leblanc G."/>
            <person name="Labrie F."/>
        </authorList>
    </citation>
    <scope>NUCLEOTIDE SEQUENCE [GENOMIC DNA]</scope>
    <scope>VARIANT SER-313</scope>
</reference>
<reference key="4">
    <citation type="journal article" date="1990" name="Ann. N. Y. Acad. Sci.">
        <title>Purification, cloning, complementary DNA structure, and predicted amino acid sequence of human estradiol 17 beta-dehydrogenase.</title>
        <authorList>
            <person name="Luu-The V."/>
            <person name="Labrie C."/>
            <person name="Zhao H.F."/>
            <person name="Couet J."/>
            <person name="Lachance Y."/>
            <person name="Simard J."/>
            <person name="Cote J."/>
            <person name="Leblanc G."/>
            <person name="Lagace L."/>
            <person name="Berube D."/>
            <person name="Gagne R."/>
            <person name="Labrie F."/>
        </authorList>
    </citation>
    <scope>NUCLEOTIDE SEQUENCE [MRNA]</scope>
    <scope>VARIANT SER-313</scope>
</reference>
<reference key="5">
    <citation type="journal article" date="1992" name="Eur. J. Biochem.">
        <title>Genomic organization and DNA sequences of human 17 beta-hydroxysteroid dehydrogenase genes and flanking regions. Localization of multiple Alu sequences and putative cis-acting elements.</title>
        <authorList>
            <person name="Peltoketo H.E."/>
            <person name="Isomma V."/>
            <person name="Vihko R."/>
        </authorList>
    </citation>
    <scope>NUCLEOTIDE SEQUENCE [GENOMIC DNA]</scope>
    <scope>VARIANT SER-313</scope>
</reference>
<reference key="6">
    <citation type="submission" date="1995-09" db="EMBL/GenBank/DDBJ databases">
        <authorList>
            <person name="Shen Y."/>
            <person name="Gibbs R.A."/>
        </authorList>
    </citation>
    <scope>NUCLEOTIDE SEQUENCE [GENOMIC DNA]</scope>
    <scope>VARIANT SER-313</scope>
</reference>
<reference key="7">
    <citation type="journal article" date="2004" name="Nat. Genet.">
        <title>Complete sequencing and characterization of 21,243 full-length human cDNAs.</title>
        <authorList>
            <person name="Ota T."/>
            <person name="Suzuki Y."/>
            <person name="Nishikawa T."/>
            <person name="Otsuki T."/>
            <person name="Sugiyama T."/>
            <person name="Irie R."/>
            <person name="Wakamatsu A."/>
            <person name="Hayashi K."/>
            <person name="Sato H."/>
            <person name="Nagai K."/>
            <person name="Kimura K."/>
            <person name="Makita H."/>
            <person name="Sekine M."/>
            <person name="Obayashi M."/>
            <person name="Nishi T."/>
            <person name="Shibahara T."/>
            <person name="Tanaka T."/>
            <person name="Ishii S."/>
            <person name="Yamamoto J."/>
            <person name="Saito K."/>
            <person name="Kawai Y."/>
            <person name="Isono Y."/>
            <person name="Nakamura Y."/>
            <person name="Nagahari K."/>
            <person name="Murakami K."/>
            <person name="Yasuda T."/>
            <person name="Iwayanagi T."/>
            <person name="Wagatsuma M."/>
            <person name="Shiratori A."/>
            <person name="Sudo H."/>
            <person name="Hosoiri T."/>
            <person name="Kaku Y."/>
            <person name="Kodaira H."/>
            <person name="Kondo H."/>
            <person name="Sugawara M."/>
            <person name="Takahashi M."/>
            <person name="Kanda K."/>
            <person name="Yokoi T."/>
            <person name="Furuya T."/>
            <person name="Kikkawa E."/>
            <person name="Omura Y."/>
            <person name="Abe K."/>
            <person name="Kamihara K."/>
            <person name="Katsuta N."/>
            <person name="Sato K."/>
            <person name="Tanikawa M."/>
            <person name="Yamazaki M."/>
            <person name="Ninomiya K."/>
            <person name="Ishibashi T."/>
            <person name="Yamashita H."/>
            <person name="Murakawa K."/>
            <person name="Fujimori K."/>
            <person name="Tanai H."/>
            <person name="Kimata M."/>
            <person name="Watanabe M."/>
            <person name="Hiraoka S."/>
            <person name="Chiba Y."/>
            <person name="Ishida S."/>
            <person name="Ono Y."/>
            <person name="Takiguchi S."/>
            <person name="Watanabe S."/>
            <person name="Yosida M."/>
            <person name="Hotuta T."/>
            <person name="Kusano J."/>
            <person name="Kanehori K."/>
            <person name="Takahashi-Fujii A."/>
            <person name="Hara H."/>
            <person name="Tanase T.-O."/>
            <person name="Nomura Y."/>
            <person name="Togiya S."/>
            <person name="Komai F."/>
            <person name="Hara R."/>
            <person name="Takeuchi K."/>
            <person name="Arita M."/>
            <person name="Imose N."/>
            <person name="Musashino K."/>
            <person name="Yuuki H."/>
            <person name="Oshima A."/>
            <person name="Sasaki N."/>
            <person name="Aotsuka S."/>
            <person name="Yoshikawa Y."/>
            <person name="Matsunawa H."/>
            <person name="Ichihara T."/>
            <person name="Shiohata N."/>
            <person name="Sano S."/>
            <person name="Moriya S."/>
            <person name="Momiyama H."/>
            <person name="Satoh N."/>
            <person name="Takami S."/>
            <person name="Terashima Y."/>
            <person name="Suzuki O."/>
            <person name="Nakagawa S."/>
            <person name="Senoh A."/>
            <person name="Mizoguchi H."/>
            <person name="Goto Y."/>
            <person name="Shimizu F."/>
            <person name="Wakebe H."/>
            <person name="Hishigaki H."/>
            <person name="Watanabe T."/>
            <person name="Sugiyama A."/>
            <person name="Takemoto M."/>
            <person name="Kawakami B."/>
            <person name="Yamazaki M."/>
            <person name="Watanabe K."/>
            <person name="Kumagai A."/>
            <person name="Itakura S."/>
            <person name="Fukuzumi Y."/>
            <person name="Fujimori Y."/>
            <person name="Komiyama M."/>
            <person name="Tashiro H."/>
            <person name="Tanigami A."/>
            <person name="Fujiwara T."/>
            <person name="Ono T."/>
            <person name="Yamada K."/>
            <person name="Fujii Y."/>
            <person name="Ozaki K."/>
            <person name="Hirao M."/>
            <person name="Ohmori Y."/>
            <person name="Kawabata A."/>
            <person name="Hikiji T."/>
            <person name="Kobatake N."/>
            <person name="Inagaki H."/>
            <person name="Ikema Y."/>
            <person name="Okamoto S."/>
            <person name="Okitani R."/>
            <person name="Kawakami T."/>
            <person name="Noguchi S."/>
            <person name="Itoh T."/>
            <person name="Shigeta K."/>
            <person name="Senba T."/>
            <person name="Matsumura K."/>
            <person name="Nakajima Y."/>
            <person name="Mizuno T."/>
            <person name="Morinaga M."/>
            <person name="Sasaki M."/>
            <person name="Togashi T."/>
            <person name="Oyama M."/>
            <person name="Hata H."/>
            <person name="Watanabe M."/>
            <person name="Komatsu T."/>
            <person name="Mizushima-Sugano J."/>
            <person name="Satoh T."/>
            <person name="Shirai Y."/>
            <person name="Takahashi Y."/>
            <person name="Nakagawa K."/>
            <person name="Okumura K."/>
            <person name="Nagase T."/>
            <person name="Nomura N."/>
            <person name="Kikuchi H."/>
            <person name="Masuho Y."/>
            <person name="Yamashita R."/>
            <person name="Nakai K."/>
            <person name="Yada T."/>
            <person name="Nakamura Y."/>
            <person name="Ohara O."/>
            <person name="Isogai T."/>
            <person name="Sugano S."/>
        </authorList>
    </citation>
    <scope>NUCLEOTIDE SEQUENCE [LARGE SCALE MRNA]</scope>
    <scope>VARIANT SER-313</scope>
    <source>
        <tissue>Placenta</tissue>
    </source>
</reference>
<reference key="8">
    <citation type="journal article" date="2006" name="Nature">
        <title>DNA sequence of human chromosome 17 and analysis of rearrangement in the human lineage.</title>
        <authorList>
            <person name="Zody M.C."/>
            <person name="Garber M."/>
            <person name="Adams D.J."/>
            <person name="Sharpe T."/>
            <person name="Harrow J."/>
            <person name="Lupski J.R."/>
            <person name="Nicholson C."/>
            <person name="Searle S.M."/>
            <person name="Wilming L."/>
            <person name="Young S.K."/>
            <person name="Abouelleil A."/>
            <person name="Allen N.R."/>
            <person name="Bi W."/>
            <person name="Bloom T."/>
            <person name="Borowsky M.L."/>
            <person name="Bugalter B.E."/>
            <person name="Butler J."/>
            <person name="Chang J.L."/>
            <person name="Chen C.-K."/>
            <person name="Cook A."/>
            <person name="Corum B."/>
            <person name="Cuomo C.A."/>
            <person name="de Jong P.J."/>
            <person name="DeCaprio D."/>
            <person name="Dewar K."/>
            <person name="FitzGerald M."/>
            <person name="Gilbert J."/>
            <person name="Gibson R."/>
            <person name="Gnerre S."/>
            <person name="Goldstein S."/>
            <person name="Grafham D.V."/>
            <person name="Grocock R."/>
            <person name="Hafez N."/>
            <person name="Hagopian D.S."/>
            <person name="Hart E."/>
            <person name="Norman C.H."/>
            <person name="Humphray S."/>
            <person name="Jaffe D.B."/>
            <person name="Jones M."/>
            <person name="Kamal M."/>
            <person name="Khodiyar V.K."/>
            <person name="LaButti K."/>
            <person name="Laird G."/>
            <person name="Lehoczky J."/>
            <person name="Liu X."/>
            <person name="Lokyitsang T."/>
            <person name="Loveland J."/>
            <person name="Lui A."/>
            <person name="Macdonald P."/>
            <person name="Major J.E."/>
            <person name="Matthews L."/>
            <person name="Mauceli E."/>
            <person name="McCarroll S.A."/>
            <person name="Mihalev A.H."/>
            <person name="Mudge J."/>
            <person name="Nguyen C."/>
            <person name="Nicol R."/>
            <person name="O'Leary S.B."/>
            <person name="Osoegawa K."/>
            <person name="Schwartz D.C."/>
            <person name="Shaw-Smith C."/>
            <person name="Stankiewicz P."/>
            <person name="Steward C."/>
            <person name="Swarbreck D."/>
            <person name="Venkataraman V."/>
            <person name="Whittaker C.A."/>
            <person name="Yang X."/>
            <person name="Zimmer A.R."/>
            <person name="Bradley A."/>
            <person name="Hubbard T."/>
            <person name="Birren B.W."/>
            <person name="Rogers J."/>
            <person name="Lander E.S."/>
            <person name="Nusbaum C."/>
        </authorList>
    </citation>
    <scope>NUCLEOTIDE SEQUENCE [LARGE SCALE GENOMIC DNA]</scope>
</reference>
<reference key="9">
    <citation type="submission" date="2005-07" db="EMBL/GenBank/DDBJ databases">
        <authorList>
            <person name="Mural R.J."/>
            <person name="Istrail S."/>
            <person name="Sutton G.G."/>
            <person name="Florea L."/>
            <person name="Halpern A.L."/>
            <person name="Mobarry C.M."/>
            <person name="Lippert R."/>
            <person name="Walenz B."/>
            <person name="Shatkay H."/>
            <person name="Dew I."/>
            <person name="Miller J.R."/>
            <person name="Flanigan M.J."/>
            <person name="Edwards N.J."/>
            <person name="Bolanos R."/>
            <person name="Fasulo D."/>
            <person name="Halldorsson B.V."/>
            <person name="Hannenhalli S."/>
            <person name="Turner R."/>
            <person name="Yooseph S."/>
            <person name="Lu F."/>
            <person name="Nusskern D.R."/>
            <person name="Shue B.C."/>
            <person name="Zheng X.H."/>
            <person name="Zhong F."/>
            <person name="Delcher A.L."/>
            <person name="Huson D.H."/>
            <person name="Kravitz S.A."/>
            <person name="Mouchard L."/>
            <person name="Reinert K."/>
            <person name="Remington K.A."/>
            <person name="Clark A.G."/>
            <person name="Waterman M.S."/>
            <person name="Eichler E.E."/>
            <person name="Adams M.D."/>
            <person name="Hunkapiller M.W."/>
            <person name="Myers E.W."/>
            <person name="Venter J.C."/>
        </authorList>
    </citation>
    <scope>NUCLEOTIDE SEQUENCE [LARGE SCALE GENOMIC DNA]</scope>
    <scope>VARIANT SER-313</scope>
</reference>
<reference key="10">
    <citation type="journal article" date="2004" name="Genome Res.">
        <title>The status, quality, and expansion of the NIH full-length cDNA project: the Mammalian Gene Collection (MGC).</title>
        <authorList>
            <consortium name="The MGC Project Team"/>
        </authorList>
    </citation>
    <scope>NUCLEOTIDE SEQUENCE [LARGE SCALE MRNA]</scope>
    <scope>VARIANT SER-313</scope>
    <source>
        <tissue>Brain</tissue>
    </source>
</reference>
<reference key="11">
    <citation type="journal article" date="1972" name="Biochemistry">
        <title>Amino acid composition and subunit structure. Human placental 17 - estradiol dehydrogenase.</title>
        <authorList>
            <person name="Burns D.J.W."/>
            <person name="Engel L.L."/>
            <person name="Bethune J.L."/>
        </authorList>
    </citation>
    <scope>PROTEIN SEQUENCE OF 2-6</scope>
</reference>
<reference key="12">
    <citation type="journal article" date="1973" name="FEBS Lett.">
        <title>Human placental 17 -oestradiol dehydrogenase. Sequence of a tryptic peptide containing an essential cysteine.</title>
        <authorList>
            <person name="Nicholas J.C."/>
            <person name="Harris J.I."/>
        </authorList>
    </citation>
    <scope>PROTEIN SEQUENCE OF 52-68</scope>
</reference>
<reference key="13">
    <citation type="journal article" date="1986" name="Biochemistry">
        <title>Human placental estradiol 17 beta-dehydrogenase: sequence of a histidine-bearing peptide in the catalytic region.</title>
        <authorList>
            <person name="Murdock G.L."/>
            <person name="Chin C.-C."/>
            <person name="Warren J.C."/>
        </authorList>
    </citation>
    <scope>PROTEIN SEQUENCE OF 205-224</scope>
</reference>
<reference key="14">
    <citation type="journal article" date="1983" name="J. Biol. Chem.">
        <title>Human placental estradiol 17 beta-dehydrogenase. Identification of a single histidine residue affinity-labeled by both 3-bromoacetoxyestrone and 12 beta-bromoacetoxy-4-estrene-3,17-dione.</title>
        <authorList>
            <person name="Murdock G.L."/>
            <person name="Chin C.C."/>
            <person name="Offord R.E."/>
            <person name="Bradshaw R.A."/>
            <person name="Warren J.C."/>
        </authorList>
    </citation>
    <scope>PROTEIN SEQUENCE OF 220-224</scope>
</reference>
<reference key="15">
    <citation type="journal article" date="1989" name="Mol. Endocrinol.">
        <title>Human placental 17 beta-hydroxysteroid dehydrogenase is homologous to NodG protein of Rhizobium meliloti.</title>
        <authorList>
            <person name="Baker M.E."/>
        </authorList>
    </citation>
    <scope>SIMILARITY TO SHORT CHAIN DEHYDROGENASES</scope>
</reference>
<reference key="16">
    <citation type="journal article" date="1997" name="Mol. Endocrinol.">
        <title>Characterization of structural and functional properties of human 17 beta-hydroxysteroid dehydrogenase type 1 using recombinant enzymes and site-directed mutagenesis.</title>
        <authorList>
            <person name="Puranen T."/>
            <person name="Poutanen M."/>
            <person name="Ghosh D."/>
            <person name="Vihko P."/>
            <person name="Vihko R."/>
        </authorList>
    </citation>
    <scope>FUNCTION</scope>
    <scope>SUBUNIT</scope>
    <scope>CATALYTIC ACTIVITY</scope>
    <scope>BIOPHYSICOCHEMICAL PROPERTIES</scope>
    <scope>MUTAGENESIS OF 112-LEU--VAL-114; SER-135; SER-143; TYR-156; LYS-160; ALA-171; HIS-222 AND GLU-283</scope>
    <scope>PHOSPHORYLATION AT SER-135</scope>
</reference>
<reference evidence="19" key="17">
    <citation type="journal article" date="1995" name="Structure">
        <title>Structure of human estrogenic 17 beta-hydroxysteroid dehydrogenase at 2.20-A resolution.</title>
        <authorList>
            <person name="Ghosh D."/>
            <person name="Pletnev V.Z."/>
            <person name="Zhu D.W."/>
            <person name="Wawrzak Z."/>
            <person name="Duax W.L."/>
            <person name="Pangborn W."/>
            <person name="Labrie F."/>
            <person name="Lin S.-X."/>
        </authorList>
    </citation>
    <scope>X-RAY CRYSTALLOGRAPHY (1.7 ANGSTROMS)</scope>
</reference>
<reference evidence="28" key="18">
    <citation type="journal article" date="1996" name="Nat. Struct. Biol.">
        <title>Crystal structure of human estrogenic 17 beta-hydroxysteroid dehydrogenase complexed with 17 beta-estradiol.</title>
        <authorList>
            <person name="Azzi A."/>
            <person name="Rehse P.H."/>
            <person name="Zhu D.W."/>
            <person name="Campbell R.L."/>
            <person name="Labrie F."/>
            <person name="Lin S.X."/>
        </authorList>
    </citation>
    <scope>X-RAY CRYSTALLOGRAPHY (2.3 ANGSTROMS)</scope>
</reference>
<reference evidence="22 23" key="19">
    <citation type="journal article" date="1996" name="Structure">
        <title>The structure of a complex of human 17beta-hydroxysteroid dehydrogenase with estradiol and NADP+ identifies two principal targets for the design of inhibitors.</title>
        <authorList>
            <person name="Breton R."/>
            <person name="Housset D."/>
            <person name="Mazza C."/>
            <person name="Fontecilla-Camps J.-C."/>
        </authorList>
    </citation>
    <scope>X-RAY CRYSTALLOGRAPHY (1.7 ANGSTROMS) IN COMPLEX WITH SUBSTRATE AND NADP</scope>
</reference>
<reference evidence="24 25 26" key="20">
    <citation type="journal article" date="1998" name="J. Biol. Chem.">
        <title>Unusual charge stabilization of NADP+ in 17beta-hydroxysteroid dehydrogenase.</title>
        <authorList>
            <person name="Mazza C."/>
            <person name="Breton R."/>
            <person name="Housset D."/>
            <person name="Fontecilla-Camps J.-C."/>
        </authorList>
    </citation>
    <scope>X-RAY CRYSTALLOGRAPHY (2.7 ANGSTROMS)</scope>
</reference>
<reference evidence="21" key="21">
    <citation type="journal article" date="1999" name="Proc. Natl. Acad. Sci. U.S.A.">
        <title>Structure of the ternary complex of human 17beta-hydroxysteroid dehydrogenase type 1 with 3-hydroxyestra-1,3,5,7-tetraen-17-one (equilin) and NADP+.</title>
        <authorList>
            <person name="Sawicki M.W."/>
            <person name="Erman M."/>
            <person name="Puranen T."/>
            <person name="Vihko P."/>
            <person name="Ghosh D."/>
        </authorList>
    </citation>
    <scope>X-RAY CRYSTALLOGRAPHY (3.0 ANGSTROMS)</scope>
</reference>
<reference evidence="20 33" key="22">
    <citation type="journal article" date="2000" name="J. Biol. Chem.">
        <title>Dehydroepiandrosterone and dihydrotestosterone recognition by human estrogenic 17beta-hydroxysteroid dehydrogenase. C-18/c-19 steroid discrimination and enzyme-induced strain.</title>
        <authorList>
            <person name="Han Q."/>
            <person name="Campbell R.L."/>
            <person name="Gangloff A."/>
            <person name="Huang Y.-W."/>
            <person name="Lin S.-X."/>
        </authorList>
    </citation>
    <scope>X-RAY CRYSTALLOGRAPHY (2.24 ANGSTROMS) OF 39-328</scope>
    <scope>MUTAGENESIS OF LEU-150</scope>
</reference>
<reference evidence="27" key="23">
    <citation type="journal article" date="2002" name="FASEB J.">
        <title>A concerted, rational design of type 1 17beta-hydroxysteroid dehydrogenase inhibitors: estradiol-adenosine hybrids with high affinity.</title>
        <authorList>
            <person name="Qiu W."/>
            <person name="Campbell R.L."/>
            <person name="Gangloff A."/>
            <person name="Dupuis P."/>
            <person name="Boivin R.P."/>
            <person name="Tremblay M.R."/>
            <person name="Poirier D."/>
            <person name="Lin S.X."/>
        </authorList>
    </citation>
    <scope>X-RAY CRYSTALLOGRAPHY (1.6 ANGSTROMS)</scope>
</reference>
<reference evidence="29" key="24">
    <citation type="journal article" date="2003" name="FASEB J.">
        <title>Pseudo-symmetry of C19 steroids, alternative binding orientations, and multispecificity in human estrogenic 17beta-hydroxysteroid dehydrogenase.</title>
        <authorList>
            <person name="Gangloff A."/>
            <person name="Shi R."/>
            <person name="Nahoum V."/>
            <person name="Lin S.X."/>
        </authorList>
    </citation>
    <scope>X-RAY CRYSTALLOGRAPHY (1.54 ANGSTROMS)</scope>
</reference>
<reference evidence="30 31 32" key="25">
    <citation type="journal article" date="2004" name="J. Biol. Chem.">
        <title>Cofactor hydrogen bonding onto the protein main chain is conserved in the short chain dehydrogenase/reductase family and contributes to nicotinamide orientation.</title>
        <authorList>
            <person name="Shi R."/>
            <person name="Lin S.X."/>
        </authorList>
    </citation>
    <scope>X-RAY CRYSTALLOGRAPHY (1.81 ANGSTROMS)</scope>
</reference>
<reference key="26">
    <citation type="journal article" date="1993" name="Hum. Mol. Genet.">
        <title>Detection of polymorphisms in the estradiol 17 beta-hydroxysteroid dehydrogenase II gene at the EDH17B2 locus on 17q11-q21.</title>
        <authorList>
            <person name="Normand T."/>
            <person name="Narod S."/>
            <person name="Labrie F."/>
            <person name="Simard J."/>
        </authorList>
    </citation>
    <scope>VARIANTS VAL-238 AND SER-313</scope>
</reference>
<keyword id="KW-0002">3D-structure</keyword>
<keyword id="KW-0963">Cytoplasm</keyword>
<keyword id="KW-0903">Direct protein sequencing</keyword>
<keyword id="KW-0444">Lipid biosynthesis</keyword>
<keyword id="KW-0443">Lipid metabolism</keyword>
<keyword id="KW-0521">NADP</keyword>
<keyword id="KW-0560">Oxidoreductase</keyword>
<keyword id="KW-0597">Phosphoprotein</keyword>
<keyword id="KW-1267">Proteomics identification</keyword>
<keyword id="KW-1185">Reference proteome</keyword>
<keyword id="KW-0752">Steroid biosynthesis</keyword>
<name>DHB1_HUMAN</name>
<dbReference type="EC" id="1.1.1.51" evidence="1"/>
<dbReference type="EC" id="1.1.1.62" evidence="14"/>
<dbReference type="EMBL" id="X13440">
    <property type="protein sequence ID" value="CAA31792.1"/>
    <property type="molecule type" value="mRNA"/>
</dbReference>
<dbReference type="EMBL" id="M36263">
    <property type="protein sequence ID" value="AAA35600.1"/>
    <property type="molecule type" value="mRNA"/>
</dbReference>
<dbReference type="EMBL" id="M27138">
    <property type="protein sequence ID" value="AAB16941.1"/>
    <property type="molecule type" value="Genomic_DNA"/>
</dbReference>
<dbReference type="EMBL" id="M84472">
    <property type="protein sequence ID" value="AAB16942.1"/>
    <property type="molecule type" value="Genomic_DNA"/>
</dbReference>
<dbReference type="EMBL" id="U34879">
    <property type="protein sequence ID" value="AAD05019.1"/>
    <property type="molecule type" value="Genomic_DNA"/>
</dbReference>
<dbReference type="EMBL" id="AK127832">
    <property type="protein sequence ID" value="BAG54583.1"/>
    <property type="molecule type" value="mRNA"/>
</dbReference>
<dbReference type="EMBL" id="AC067852">
    <property type="status" value="NOT_ANNOTATED_CDS"/>
    <property type="molecule type" value="Genomic_DNA"/>
</dbReference>
<dbReference type="EMBL" id="CH471152">
    <property type="protein sequence ID" value="EAW60836.1"/>
    <property type="molecule type" value="Genomic_DNA"/>
</dbReference>
<dbReference type="EMBL" id="BC104752">
    <property type="protein sequence ID" value="AAI04753.1"/>
    <property type="molecule type" value="mRNA"/>
</dbReference>
<dbReference type="EMBL" id="BC111935">
    <property type="protein sequence ID" value="AAI11936.1"/>
    <property type="molecule type" value="mRNA"/>
</dbReference>
<dbReference type="CCDS" id="CCDS11428.1"/>
<dbReference type="PIR" id="A36081">
    <property type="entry name" value="DEHUE7"/>
</dbReference>
<dbReference type="RefSeq" id="NP_000404.2">
    <property type="nucleotide sequence ID" value="NM_000413.4"/>
</dbReference>
<dbReference type="PDB" id="1A27">
    <property type="method" value="X-ray"/>
    <property type="resolution" value="1.90 A"/>
    <property type="chains" value="A=2-290"/>
</dbReference>
<dbReference type="PDB" id="1BHS">
    <property type="method" value="X-ray"/>
    <property type="resolution" value="2.20 A"/>
    <property type="chains" value="A=2-328"/>
</dbReference>
<dbReference type="PDB" id="1DHT">
    <property type="method" value="X-ray"/>
    <property type="resolution" value="2.24 A"/>
    <property type="chains" value="A=2-328"/>
</dbReference>
<dbReference type="PDB" id="1EQU">
    <property type="method" value="X-ray"/>
    <property type="resolution" value="3.00 A"/>
    <property type="chains" value="A/B=2-328"/>
</dbReference>
<dbReference type="PDB" id="1FDS">
    <property type="method" value="X-ray"/>
    <property type="resolution" value="1.70 A"/>
    <property type="chains" value="A=2-328"/>
</dbReference>
<dbReference type="PDB" id="1FDT">
    <property type="method" value="X-ray"/>
    <property type="resolution" value="2.20 A"/>
    <property type="chains" value="A=2-328"/>
</dbReference>
<dbReference type="PDB" id="1FDU">
    <property type="method" value="X-ray"/>
    <property type="resolution" value="2.70 A"/>
    <property type="chains" value="A/B/C/D=2-328"/>
</dbReference>
<dbReference type="PDB" id="1FDV">
    <property type="method" value="X-ray"/>
    <property type="resolution" value="3.10 A"/>
    <property type="chains" value="A/B/C/D=2-328"/>
</dbReference>
<dbReference type="PDB" id="1FDW">
    <property type="method" value="X-ray"/>
    <property type="resolution" value="2.70 A"/>
    <property type="chains" value="A=2-328"/>
</dbReference>
<dbReference type="PDB" id="1I5R">
    <property type="method" value="X-ray"/>
    <property type="resolution" value="1.60 A"/>
    <property type="chains" value="A=2-328"/>
</dbReference>
<dbReference type="PDB" id="1IOL">
    <property type="method" value="X-ray"/>
    <property type="resolution" value="2.30 A"/>
    <property type="chains" value="A=2-328"/>
</dbReference>
<dbReference type="PDB" id="1JTV">
    <property type="method" value="X-ray"/>
    <property type="resolution" value="1.54 A"/>
    <property type="chains" value="A=2-328"/>
</dbReference>
<dbReference type="PDB" id="1QYV">
    <property type="method" value="X-ray"/>
    <property type="resolution" value="1.81 A"/>
    <property type="chains" value="A=2-328"/>
</dbReference>
<dbReference type="PDB" id="1QYW">
    <property type="method" value="X-ray"/>
    <property type="resolution" value="1.63 A"/>
    <property type="chains" value="A=2-328"/>
</dbReference>
<dbReference type="PDB" id="1QYX">
    <property type="method" value="X-ray"/>
    <property type="resolution" value="1.89 A"/>
    <property type="chains" value="A=2-328"/>
</dbReference>
<dbReference type="PDB" id="3DEY">
    <property type="method" value="X-ray"/>
    <property type="resolution" value="1.70 A"/>
    <property type="chains" value="X=2-328"/>
</dbReference>
<dbReference type="PDB" id="3DHE">
    <property type="method" value="X-ray"/>
    <property type="resolution" value="2.30 A"/>
    <property type="chains" value="A=2-328"/>
</dbReference>
<dbReference type="PDB" id="3HB4">
    <property type="method" value="X-ray"/>
    <property type="resolution" value="2.21 A"/>
    <property type="chains" value="X=2-328"/>
</dbReference>
<dbReference type="PDB" id="3HB5">
    <property type="method" value="X-ray"/>
    <property type="resolution" value="2.00 A"/>
    <property type="chains" value="X=2-328"/>
</dbReference>
<dbReference type="PDB" id="3KLM">
    <property type="method" value="X-ray"/>
    <property type="resolution" value="1.70 A"/>
    <property type="chains" value="X=2-328"/>
</dbReference>
<dbReference type="PDB" id="3KLP">
    <property type="method" value="X-ray"/>
    <property type="resolution" value="2.50 A"/>
    <property type="chains" value="X=2-328"/>
</dbReference>
<dbReference type="PDB" id="3KM0">
    <property type="method" value="X-ray"/>
    <property type="resolution" value="2.30 A"/>
    <property type="chains" value="A/B=2-328"/>
</dbReference>
<dbReference type="PDB" id="6CGC">
    <property type="method" value="X-ray"/>
    <property type="resolution" value="2.10 A"/>
    <property type="chains" value="A/B=1-328"/>
</dbReference>
<dbReference type="PDB" id="6CGE">
    <property type="method" value="X-ray"/>
    <property type="resolution" value="2.20 A"/>
    <property type="chains" value="A/B=1-328"/>
</dbReference>
<dbReference type="PDB" id="6DTP">
    <property type="method" value="X-ray"/>
    <property type="resolution" value="2.00 A"/>
    <property type="chains" value="A/B=1-328"/>
</dbReference>
<dbReference type="PDB" id="6MNC">
    <property type="method" value="X-ray"/>
    <property type="resolution" value="2.40 A"/>
    <property type="chains" value="A/B=1-328"/>
</dbReference>
<dbReference type="PDB" id="6MNE">
    <property type="method" value="X-ray"/>
    <property type="resolution" value="1.86 A"/>
    <property type="chains" value="A/B=1-328"/>
</dbReference>
<dbReference type="PDB" id="7X3Z">
    <property type="method" value="X-ray"/>
    <property type="resolution" value="2.25 A"/>
    <property type="chains" value="A/B=1-328"/>
</dbReference>
<dbReference type="PDBsum" id="1A27"/>
<dbReference type="PDBsum" id="1BHS"/>
<dbReference type="PDBsum" id="1DHT"/>
<dbReference type="PDBsum" id="1EQU"/>
<dbReference type="PDBsum" id="1FDS"/>
<dbReference type="PDBsum" id="1FDT"/>
<dbReference type="PDBsum" id="1FDU"/>
<dbReference type="PDBsum" id="1FDV"/>
<dbReference type="PDBsum" id="1FDW"/>
<dbReference type="PDBsum" id="1I5R"/>
<dbReference type="PDBsum" id="1IOL"/>
<dbReference type="PDBsum" id="1JTV"/>
<dbReference type="PDBsum" id="1QYV"/>
<dbReference type="PDBsum" id="1QYW"/>
<dbReference type="PDBsum" id="1QYX"/>
<dbReference type="PDBsum" id="3DEY"/>
<dbReference type="PDBsum" id="3DHE"/>
<dbReference type="PDBsum" id="3HB4"/>
<dbReference type="PDBsum" id="3HB5"/>
<dbReference type="PDBsum" id="3KLM"/>
<dbReference type="PDBsum" id="3KLP"/>
<dbReference type="PDBsum" id="3KM0"/>
<dbReference type="PDBsum" id="6CGC"/>
<dbReference type="PDBsum" id="6CGE"/>
<dbReference type="PDBsum" id="6DTP"/>
<dbReference type="PDBsum" id="6MNC"/>
<dbReference type="PDBsum" id="6MNE"/>
<dbReference type="PDBsum" id="7X3Z"/>
<dbReference type="SMR" id="P14061"/>
<dbReference type="BioGRID" id="109525">
    <property type="interactions" value="58"/>
</dbReference>
<dbReference type="FunCoup" id="P14061">
    <property type="interactions" value="392"/>
</dbReference>
<dbReference type="IntAct" id="P14061">
    <property type="interactions" value="15"/>
</dbReference>
<dbReference type="STRING" id="9606.ENSP00000225929"/>
<dbReference type="BindingDB" id="P14061"/>
<dbReference type="ChEMBL" id="CHEMBL3181"/>
<dbReference type="DrugBank" id="DB01561">
    <property type="generic name" value="Androstanedione"/>
</dbReference>
<dbReference type="DrugBank" id="DB01536">
    <property type="generic name" value="Androstenedione"/>
</dbReference>
<dbReference type="DrugBank" id="DB07352">
    <property type="generic name" value="Apigenin"/>
</dbReference>
<dbReference type="DrugBank" id="DB02323">
    <property type="generic name" value="EM-1745"/>
</dbReference>
<dbReference type="DrugBank" id="DB02187">
    <property type="generic name" value="Equilin"/>
</dbReference>
<dbReference type="DrugBank" id="DB01852">
    <property type="generic name" value="Kaempherol"/>
</dbReference>
<dbReference type="DrugBank" id="DB00157">
    <property type="generic name" value="NADH"/>
</dbReference>
<dbReference type="DrugBank" id="DB14128">
    <property type="generic name" value="Nadide"/>
</dbReference>
<dbReference type="DrugBank" id="DB03461">
    <property type="generic name" value="Nicotinamide adenine dinucleotide phosphate"/>
</dbReference>
<dbReference type="DrugBank" id="DB01708">
    <property type="generic name" value="Prasterone"/>
</dbReference>
<dbReference type="DrugBank" id="DB02901">
    <property type="generic name" value="Stanolone"/>
</dbReference>
<dbReference type="DrugBank" id="DB13951">
    <property type="generic name" value="Stanolone acetate"/>
</dbReference>
<dbReference type="DrugCentral" id="P14061"/>
<dbReference type="SwissLipids" id="SLP:000001218"/>
<dbReference type="iPTMnet" id="P14061"/>
<dbReference type="SwissPalm" id="P14061"/>
<dbReference type="BioMuta" id="HSD17B1"/>
<dbReference type="DMDM" id="313104233"/>
<dbReference type="MassIVE" id="P14061"/>
<dbReference type="PaxDb" id="9606-ENSP00000466799"/>
<dbReference type="PeptideAtlas" id="P14061"/>
<dbReference type="ProteomicsDB" id="53018"/>
<dbReference type="Antibodypedia" id="16966">
    <property type="antibodies" value="292 antibodies from 33 providers"/>
</dbReference>
<dbReference type="DNASU" id="3292"/>
<dbReference type="Ensembl" id="ENST00000585807.6">
    <property type="protein sequence ID" value="ENSP00000466799.1"/>
    <property type="gene ID" value="ENSG00000108786.11"/>
</dbReference>
<dbReference type="GeneID" id="3292"/>
<dbReference type="KEGG" id="hsa:3292"/>
<dbReference type="MANE-Select" id="ENST00000585807.6">
    <property type="protein sequence ID" value="ENSP00000466799.1"/>
    <property type="RefSeq nucleotide sequence ID" value="NM_000413.4"/>
    <property type="RefSeq protein sequence ID" value="NP_000404.2"/>
</dbReference>
<dbReference type="UCSC" id="uc002hzw.4">
    <property type="organism name" value="human"/>
</dbReference>
<dbReference type="AGR" id="HGNC:5210"/>
<dbReference type="CTD" id="3292"/>
<dbReference type="DisGeNET" id="3292"/>
<dbReference type="GeneCards" id="HSD17B1"/>
<dbReference type="HGNC" id="HGNC:5210">
    <property type="gene designation" value="HSD17B1"/>
</dbReference>
<dbReference type="HPA" id="ENSG00000108786">
    <property type="expression patterns" value="Tissue enriched (placenta)"/>
</dbReference>
<dbReference type="MIM" id="109684">
    <property type="type" value="gene"/>
</dbReference>
<dbReference type="neXtProt" id="NX_P14061"/>
<dbReference type="OpenTargets" id="ENSG00000108786"/>
<dbReference type="PharmGKB" id="PA29478"/>
<dbReference type="VEuPathDB" id="HostDB:ENSG00000108786"/>
<dbReference type="eggNOG" id="KOG1205">
    <property type="taxonomic scope" value="Eukaryota"/>
</dbReference>
<dbReference type="GeneTree" id="ENSGT00940000160415"/>
<dbReference type="HOGENOM" id="CLU_010194_2_9_1"/>
<dbReference type="InParanoid" id="P14061"/>
<dbReference type="OMA" id="KGLHRDT"/>
<dbReference type="OrthoDB" id="47007at2759"/>
<dbReference type="PAN-GO" id="P14061">
    <property type="GO annotations" value="3 GO annotations based on evolutionary models"/>
</dbReference>
<dbReference type="PhylomeDB" id="P14061"/>
<dbReference type="BRENDA" id="1.1.1.51">
    <property type="organism ID" value="2681"/>
</dbReference>
<dbReference type="BRENDA" id="1.1.1.62">
    <property type="organism ID" value="2681"/>
</dbReference>
<dbReference type="PathwayCommons" id="P14061"/>
<dbReference type="Reactome" id="R-HSA-193144">
    <property type="pathway name" value="Estrogen biosynthesis"/>
</dbReference>
<dbReference type="Reactome" id="R-HSA-2453902">
    <property type="pathway name" value="The canonical retinoid cycle in rods (twilight vision)"/>
</dbReference>
<dbReference type="SABIO-RK" id="P14061"/>
<dbReference type="SignaLink" id="P14061"/>
<dbReference type="SIGNOR" id="P14061"/>
<dbReference type="UniPathway" id="UPA00769"/>
<dbReference type="BioGRID-ORCS" id="3292">
    <property type="hits" value="8 hits in 1158 CRISPR screens"/>
</dbReference>
<dbReference type="ChiTaRS" id="HSD17B1">
    <property type="organism name" value="human"/>
</dbReference>
<dbReference type="EvolutionaryTrace" id="P14061"/>
<dbReference type="GeneWiki" id="HSD17B1"/>
<dbReference type="GenomeRNAi" id="3292"/>
<dbReference type="Pharos" id="P14061">
    <property type="development level" value="Tchem"/>
</dbReference>
<dbReference type="PRO" id="PR:P14061"/>
<dbReference type="Proteomes" id="UP000005640">
    <property type="component" value="Chromosome 17"/>
</dbReference>
<dbReference type="RNAct" id="P14061">
    <property type="molecule type" value="protein"/>
</dbReference>
<dbReference type="Bgee" id="ENSG00000108786">
    <property type="expression patterns" value="Expressed in placenta and 101 other cell types or tissues"/>
</dbReference>
<dbReference type="ExpressionAtlas" id="P14061">
    <property type="expression patterns" value="baseline and differential"/>
</dbReference>
<dbReference type="GO" id="GO:0005737">
    <property type="term" value="C:cytoplasm"/>
    <property type="evidence" value="ECO:0000304"/>
    <property type="project" value="ProtInc"/>
</dbReference>
<dbReference type="GO" id="GO:0005829">
    <property type="term" value="C:cytosol"/>
    <property type="evidence" value="ECO:0000314"/>
    <property type="project" value="HPA"/>
</dbReference>
<dbReference type="GO" id="GO:0072582">
    <property type="term" value="F:17-beta-hydroxysteroid dehydrogenase (NADP+) activity"/>
    <property type="evidence" value="ECO:0000250"/>
    <property type="project" value="UniProtKB"/>
</dbReference>
<dbReference type="GO" id="GO:0003824">
    <property type="term" value="F:catalytic activity"/>
    <property type="evidence" value="ECO:0000304"/>
    <property type="project" value="ProtInc"/>
</dbReference>
<dbReference type="GO" id="GO:0004303">
    <property type="term" value="F:estradiol 17-beta-dehydrogenase [NAD(P)+] activity"/>
    <property type="evidence" value="ECO:0000314"/>
    <property type="project" value="UniProtKB"/>
</dbReference>
<dbReference type="GO" id="GO:1903924">
    <property type="term" value="F:estradiol binding"/>
    <property type="evidence" value="ECO:0000314"/>
    <property type="project" value="CAFA"/>
</dbReference>
<dbReference type="GO" id="GO:0050661">
    <property type="term" value="F:NADP binding"/>
    <property type="evidence" value="ECO:0000314"/>
    <property type="project" value="UniProtKB"/>
</dbReference>
<dbReference type="GO" id="GO:0070401">
    <property type="term" value="F:NADP+ binding"/>
    <property type="evidence" value="ECO:0000315"/>
    <property type="project" value="CAFA"/>
</dbReference>
<dbReference type="GO" id="GO:0042803">
    <property type="term" value="F:protein homodimerization activity"/>
    <property type="evidence" value="ECO:0000314"/>
    <property type="project" value="UniProtKB"/>
</dbReference>
<dbReference type="GO" id="GO:0036094">
    <property type="term" value="F:small molecule binding"/>
    <property type="evidence" value="ECO:0000269"/>
    <property type="project" value="DisProt"/>
</dbReference>
<dbReference type="GO" id="GO:0005496">
    <property type="term" value="F:steroid binding"/>
    <property type="evidence" value="ECO:0000314"/>
    <property type="project" value="CAFA"/>
</dbReference>
<dbReference type="GO" id="GO:0047045">
    <property type="term" value="F:testosterone 17-beta-dehydrogenase (NADP+) activity"/>
    <property type="evidence" value="ECO:0007669"/>
    <property type="project" value="RHEA"/>
</dbReference>
<dbReference type="GO" id="GO:0047035">
    <property type="term" value="F:testosterone dehydrogenase (NAD+) activity"/>
    <property type="evidence" value="ECO:0007669"/>
    <property type="project" value="Ensembl"/>
</dbReference>
<dbReference type="GO" id="GO:0030283">
    <property type="term" value="F:testosterone dehydrogenase [NAD(P)+] activity"/>
    <property type="evidence" value="ECO:0000250"/>
    <property type="project" value="UniProtKB"/>
</dbReference>
<dbReference type="GO" id="GO:0060612">
    <property type="term" value="P:adipose tissue development"/>
    <property type="evidence" value="ECO:0007669"/>
    <property type="project" value="Ensembl"/>
</dbReference>
<dbReference type="GO" id="GO:0060348">
    <property type="term" value="P:bone development"/>
    <property type="evidence" value="ECO:0007669"/>
    <property type="project" value="Ensembl"/>
</dbReference>
<dbReference type="GO" id="GO:0071248">
    <property type="term" value="P:cellular response to metal ion"/>
    <property type="evidence" value="ECO:0007669"/>
    <property type="project" value="Ensembl"/>
</dbReference>
<dbReference type="GO" id="GO:0006703">
    <property type="term" value="P:estrogen biosynthetic process"/>
    <property type="evidence" value="ECO:0000314"/>
    <property type="project" value="UniProtKB"/>
</dbReference>
<dbReference type="GO" id="GO:0008210">
    <property type="term" value="P:estrogen metabolic process"/>
    <property type="evidence" value="ECO:0000304"/>
    <property type="project" value="ProtInc"/>
</dbReference>
<dbReference type="GO" id="GO:0010467">
    <property type="term" value="P:gene expression"/>
    <property type="evidence" value="ECO:0007669"/>
    <property type="project" value="Ensembl"/>
</dbReference>
<dbReference type="GO" id="GO:0007040">
    <property type="term" value="P:lysosome organization"/>
    <property type="evidence" value="ECO:0007669"/>
    <property type="project" value="Ensembl"/>
</dbReference>
<dbReference type="GO" id="GO:0007519">
    <property type="term" value="P:skeletal muscle tissue development"/>
    <property type="evidence" value="ECO:0007669"/>
    <property type="project" value="Ensembl"/>
</dbReference>
<dbReference type="GO" id="GO:0006694">
    <property type="term" value="P:steroid biosynthetic process"/>
    <property type="evidence" value="ECO:0000304"/>
    <property type="project" value="ProtInc"/>
</dbReference>
<dbReference type="GO" id="GO:0061370">
    <property type="term" value="P:testosterone biosynthetic process"/>
    <property type="evidence" value="ECO:0000250"/>
    <property type="project" value="UniProtKB"/>
</dbReference>
<dbReference type="CDD" id="cd09806">
    <property type="entry name" value="type1_17beta-HSD-like_SDR_c"/>
    <property type="match status" value="1"/>
</dbReference>
<dbReference type="FunFam" id="3.40.50.720:FF:000323">
    <property type="entry name" value="Estradiol 17-beta-dehydrogenase 1"/>
    <property type="match status" value="1"/>
</dbReference>
<dbReference type="Gene3D" id="3.40.50.720">
    <property type="entry name" value="NAD(P)-binding Rossmann-like Domain"/>
    <property type="match status" value="1"/>
</dbReference>
<dbReference type="InterPro" id="IPR011348">
    <property type="entry name" value="17beta_DH"/>
</dbReference>
<dbReference type="InterPro" id="IPR036291">
    <property type="entry name" value="NAD(P)-bd_dom_sf"/>
</dbReference>
<dbReference type="InterPro" id="IPR020904">
    <property type="entry name" value="Sc_DH/Rdtase_CS"/>
</dbReference>
<dbReference type="InterPro" id="IPR002347">
    <property type="entry name" value="SDR_fam"/>
</dbReference>
<dbReference type="PANTHER" id="PTHR43391:SF15">
    <property type="entry name" value="17-BETA-HYDROXYSTEROID DEHYDROGENASE TYPE 1"/>
    <property type="match status" value="1"/>
</dbReference>
<dbReference type="PANTHER" id="PTHR43391">
    <property type="entry name" value="RETINOL DEHYDROGENASE-RELATED"/>
    <property type="match status" value="1"/>
</dbReference>
<dbReference type="Pfam" id="PF00106">
    <property type="entry name" value="adh_short"/>
    <property type="match status" value="1"/>
</dbReference>
<dbReference type="PIRSF" id="PIRSF000095">
    <property type="entry name" value="17beta-HSD"/>
    <property type="match status" value="1"/>
</dbReference>
<dbReference type="PRINTS" id="PR00081">
    <property type="entry name" value="GDHRDH"/>
</dbReference>
<dbReference type="PRINTS" id="PR00080">
    <property type="entry name" value="SDRFAMILY"/>
</dbReference>
<dbReference type="SUPFAM" id="SSF51735">
    <property type="entry name" value="NAD(P)-binding Rossmann-fold domains"/>
    <property type="match status" value="1"/>
</dbReference>
<dbReference type="PROSITE" id="PS00061">
    <property type="entry name" value="ADH_SHORT"/>
    <property type="match status" value="1"/>
</dbReference>
<feature type="initiator methionine" description="Removed" evidence="11">
    <location>
        <position position="1"/>
    </location>
</feature>
<feature type="chain" id="PRO_0000054567" description="17-beta-hydroxysteroid dehydrogenase type 1">
    <location>
        <begin position="2"/>
        <end position="328"/>
    </location>
</feature>
<feature type="region of interest" description="Disordered" evidence="2">
    <location>
        <begin position="291"/>
        <end position="328"/>
    </location>
</feature>
<feature type="active site" description="Proton acceptor">
    <location>
        <position position="156"/>
    </location>
</feature>
<feature type="binding site" evidence="13">
    <location>
        <begin position="10"/>
        <end position="38"/>
    </location>
    <ligand>
        <name>NADP(+)</name>
        <dbReference type="ChEBI" id="CHEBI:58349"/>
    </ligand>
</feature>
<feature type="binding site" evidence="13">
    <location>
        <position position="66"/>
    </location>
    <ligand>
        <name>NADP(+)</name>
        <dbReference type="ChEBI" id="CHEBI:58349"/>
    </ligand>
</feature>
<feature type="binding site" evidence="13">
    <location>
        <position position="143"/>
    </location>
    <ligand>
        <name>substrate</name>
    </ligand>
</feature>
<feature type="binding site" evidence="13">
    <location>
        <position position="160"/>
    </location>
    <ligand>
        <name>NADP(+)</name>
        <dbReference type="ChEBI" id="CHEBI:58349"/>
    </ligand>
</feature>
<feature type="modified residue" description="Phosphoserine; by PKA" evidence="14">
    <location>
        <position position="135"/>
    </location>
</feature>
<feature type="sequence variant" id="VAR_006951" description="In dbSNP:rs147402365." evidence="12">
    <original>A</original>
    <variation>V</variation>
    <location>
        <position position="238"/>
    </location>
</feature>
<feature type="sequence variant" id="VAR_006952" description="In dbSNP:rs605059." evidence="4 5 6 7 8 9 10 12 15 16">
    <original>G</original>
    <variation>S</variation>
    <location>
        <position position="313"/>
    </location>
</feature>
<feature type="mutagenesis site" description="Loss of 17-beta-hydroxysteroid dehydrogenase activity." evidence="14">
    <original>LDV</original>
    <variation>F</variation>
    <location>
        <begin position="112"/>
        <end position="114"/>
    </location>
</feature>
<feature type="mutagenesis site" description="Abolishes phosphorylation. No effect on 17-beta-hydroxysteroid dehydrogenase activity." evidence="14">
    <original>S</original>
    <variation>A</variation>
    <location>
        <position position="135"/>
    </location>
</feature>
<feature type="mutagenesis site" description="Loss of 17-beta-hydroxysteroid dehydrogenase activity." evidence="14">
    <original>S</original>
    <variation>A</variation>
    <location>
        <position position="143"/>
    </location>
</feature>
<feature type="mutagenesis site" description="Alters substrate specificity." evidence="3">
    <original>L</original>
    <variation>V</variation>
    <location>
        <position position="150"/>
    </location>
</feature>
<feature type="mutagenesis site" description="Loss of 17-beta-hydroxysteroid dehydrogenase activity." evidence="14">
    <original>Y</original>
    <variation>A</variation>
    <location>
        <position position="156"/>
    </location>
</feature>
<feature type="mutagenesis site" description="Loss of 17-beta-hydroxysteroid dehydrogenase activity." evidence="14">
    <original>K</original>
    <variation>A</variation>
    <location>
        <position position="160"/>
    </location>
</feature>
<feature type="mutagenesis site" description="Loss of 17-beta-hydroxysteroid dehydrogenase activity." evidence="14">
    <original>A</original>
    <variation>AEF</variation>
    <location>
        <position position="171"/>
    </location>
</feature>
<feature type="mutagenesis site" description="No effect on conversion of estrone to 17beta-estradiol." evidence="14">
    <original>H</original>
    <variation>A</variation>
    <location>
        <position position="222"/>
    </location>
</feature>
<feature type="mutagenesis site" description="No effect on conversion of estrone to 17beta-estradiol." evidence="14">
    <original>E</original>
    <variation>A</variation>
    <location>
        <position position="283"/>
    </location>
</feature>
<feature type="mutagenesis site" description="No effect on conversion of estrone to 17beta-estradiol." evidence="14">
    <original>E</original>
    <variation>Q</variation>
    <location>
        <position position="283"/>
    </location>
</feature>
<feature type="sequence conflict" description="In Ref. 11; AA sequence." evidence="17" ref="11">
    <original>R</original>
    <variation>E</variation>
    <location>
        <position position="3"/>
    </location>
</feature>
<feature type="strand" evidence="36">
    <location>
        <begin position="4"/>
        <end position="9"/>
    </location>
</feature>
<feature type="helix" evidence="36">
    <location>
        <begin position="14"/>
        <end position="24"/>
    </location>
</feature>
<feature type="strand" evidence="36">
    <location>
        <begin position="31"/>
        <end position="38"/>
    </location>
</feature>
<feature type="helix" evidence="36">
    <location>
        <begin position="40"/>
        <end position="42"/>
    </location>
</feature>
<feature type="helix" evidence="36">
    <location>
        <begin position="44"/>
        <end position="52"/>
    </location>
</feature>
<feature type="strand" evidence="36">
    <location>
        <begin position="59"/>
        <end position="64"/>
    </location>
</feature>
<feature type="helix" evidence="36">
    <location>
        <begin position="70"/>
        <end position="78"/>
    </location>
</feature>
<feature type="strand" evidence="36">
    <location>
        <begin position="86"/>
        <end position="90"/>
    </location>
</feature>
<feature type="helix" evidence="36">
    <location>
        <begin position="100"/>
        <end position="102"/>
    </location>
</feature>
<feature type="helix" evidence="36">
    <location>
        <begin position="105"/>
        <end position="115"/>
    </location>
</feature>
<feature type="helix" evidence="36">
    <location>
        <begin position="117"/>
        <end position="133"/>
    </location>
</feature>
<feature type="strand" evidence="36">
    <location>
        <begin position="136"/>
        <end position="143"/>
    </location>
</feature>
<feature type="helix" evidence="36">
    <location>
        <begin position="144"/>
        <end position="146"/>
    </location>
</feature>
<feature type="helix" evidence="36">
    <location>
        <begin position="154"/>
        <end position="174"/>
    </location>
</feature>
<feature type="helix" evidence="36">
    <location>
        <begin position="175"/>
        <end position="177"/>
    </location>
</feature>
<feature type="strand" evidence="36">
    <location>
        <begin position="179"/>
        <end position="186"/>
    </location>
</feature>
<feature type="strand" evidence="34">
    <location>
        <begin position="189"/>
        <end position="192"/>
    </location>
</feature>
<feature type="turn" evidence="34">
    <location>
        <begin position="193"/>
        <end position="196"/>
    </location>
</feature>
<feature type="helix" evidence="36">
    <location>
        <begin position="201"/>
        <end position="206"/>
    </location>
</feature>
<feature type="helix" evidence="36">
    <location>
        <begin position="210"/>
        <end position="230"/>
    </location>
</feature>
<feature type="helix" evidence="36">
    <location>
        <begin position="234"/>
        <end position="246"/>
    </location>
</feature>
<feature type="strand" evidence="36">
    <location>
        <begin position="252"/>
        <end position="256"/>
    </location>
</feature>
<feature type="strand" evidence="35">
    <location>
        <begin position="258"/>
        <end position="260"/>
    </location>
</feature>
<feature type="helix" evidence="36">
    <location>
        <begin position="261"/>
        <end position="269"/>
    </location>
</feature>
<feature type="helix" evidence="36">
    <location>
        <begin position="274"/>
        <end position="285"/>
    </location>
</feature>
<gene>
    <name evidence="18" type="primary">HSD17B1</name>
    <name type="synonym">E17KSR</name>
    <name type="synonym">EDH17B1</name>
    <name type="synonym">EDH17B2</name>
    <name type="synonym">EDHB17</name>
    <name type="synonym">SDR28C1</name>
</gene>
<protein>
    <recommendedName>
        <fullName evidence="17">17-beta-hydroxysteroid dehydrogenase type 1</fullName>
        <shortName>17-beta-HSD 1</shortName>
        <ecNumber evidence="1">1.1.1.51</ecNumber>
    </recommendedName>
    <alternativeName>
        <fullName>20 alpha-hydroxysteroid dehydrogenase</fullName>
        <shortName>20-alpha-HSD</shortName>
    </alternativeName>
    <alternativeName>
        <fullName>E2DH</fullName>
    </alternativeName>
    <alternativeName>
        <fullName evidence="17">Estradiol 17-beta-dehydrogenase 1</fullName>
        <ecNumber evidence="14">1.1.1.62</ecNumber>
    </alternativeName>
    <alternativeName>
        <fullName>Placental 17-beta-hydroxysteroid dehydrogenase</fullName>
    </alternativeName>
    <alternativeName>
        <fullName>Short chain dehydrogenase/reductase family 28C member 1</fullName>
    </alternativeName>
</protein>
<organism>
    <name type="scientific">Homo sapiens</name>
    <name type="common">Human</name>
    <dbReference type="NCBI Taxonomy" id="9606"/>
    <lineage>
        <taxon>Eukaryota</taxon>
        <taxon>Metazoa</taxon>
        <taxon>Chordata</taxon>
        <taxon>Craniata</taxon>
        <taxon>Vertebrata</taxon>
        <taxon>Euteleostomi</taxon>
        <taxon>Mammalia</taxon>
        <taxon>Eutheria</taxon>
        <taxon>Euarchontoglires</taxon>
        <taxon>Primates</taxon>
        <taxon>Haplorrhini</taxon>
        <taxon>Catarrhini</taxon>
        <taxon>Hominidae</taxon>
        <taxon>Homo</taxon>
    </lineage>
</organism>
<evidence type="ECO:0000250" key="1">
    <source>
        <dbReference type="UniProtKB" id="P51656"/>
    </source>
</evidence>
<evidence type="ECO:0000256" key="2">
    <source>
        <dbReference type="SAM" id="MobiDB-lite"/>
    </source>
</evidence>
<evidence type="ECO:0000269" key="3">
    <source>
    </source>
</evidence>
<evidence type="ECO:0000269" key="4">
    <source>
    </source>
</evidence>
<evidence type="ECO:0000269" key="5">
    <source>
    </source>
</evidence>
<evidence type="ECO:0000269" key="6">
    <source>
    </source>
</evidence>
<evidence type="ECO:0000269" key="7">
    <source>
    </source>
</evidence>
<evidence type="ECO:0000269" key="8">
    <source>
    </source>
</evidence>
<evidence type="ECO:0000269" key="9">
    <source>
    </source>
</evidence>
<evidence type="ECO:0000269" key="10">
    <source>
    </source>
</evidence>
<evidence type="ECO:0000269" key="11">
    <source>
    </source>
</evidence>
<evidence type="ECO:0000269" key="12">
    <source>
    </source>
</evidence>
<evidence type="ECO:0000269" key="13">
    <source>
    </source>
</evidence>
<evidence type="ECO:0000269" key="14">
    <source>
    </source>
</evidence>
<evidence type="ECO:0000269" key="15">
    <source ref="6"/>
</evidence>
<evidence type="ECO:0000269" key="16">
    <source ref="9"/>
</evidence>
<evidence type="ECO:0000305" key="17"/>
<evidence type="ECO:0000312" key="18">
    <source>
        <dbReference type="HGNC" id="HGNC:5210"/>
    </source>
</evidence>
<evidence type="ECO:0007744" key="19">
    <source>
        <dbReference type="PDB" id="1BHS"/>
    </source>
</evidence>
<evidence type="ECO:0007744" key="20">
    <source>
        <dbReference type="PDB" id="1DHT"/>
    </source>
</evidence>
<evidence type="ECO:0007744" key="21">
    <source>
        <dbReference type="PDB" id="1EQU"/>
    </source>
</evidence>
<evidence type="ECO:0007744" key="22">
    <source>
        <dbReference type="PDB" id="1FDS"/>
    </source>
</evidence>
<evidence type="ECO:0007744" key="23">
    <source>
        <dbReference type="PDB" id="1FDT"/>
    </source>
</evidence>
<evidence type="ECO:0007744" key="24">
    <source>
        <dbReference type="PDB" id="1FDU"/>
    </source>
</evidence>
<evidence type="ECO:0007744" key="25">
    <source>
        <dbReference type="PDB" id="1FDV"/>
    </source>
</evidence>
<evidence type="ECO:0007744" key="26">
    <source>
        <dbReference type="PDB" id="1FDW"/>
    </source>
</evidence>
<evidence type="ECO:0007744" key="27">
    <source>
        <dbReference type="PDB" id="1I5R"/>
    </source>
</evidence>
<evidence type="ECO:0007744" key="28">
    <source>
        <dbReference type="PDB" id="1IOL"/>
    </source>
</evidence>
<evidence type="ECO:0007744" key="29">
    <source>
        <dbReference type="PDB" id="1JTV"/>
    </source>
</evidence>
<evidence type="ECO:0007744" key="30">
    <source>
        <dbReference type="PDB" id="1QYV"/>
    </source>
</evidence>
<evidence type="ECO:0007744" key="31">
    <source>
        <dbReference type="PDB" id="1QYW"/>
    </source>
</evidence>
<evidence type="ECO:0007744" key="32">
    <source>
        <dbReference type="PDB" id="1QYX"/>
    </source>
</evidence>
<evidence type="ECO:0007744" key="33">
    <source>
        <dbReference type="PDB" id="3DHE"/>
    </source>
</evidence>
<evidence type="ECO:0007829" key="34">
    <source>
        <dbReference type="PDB" id="1A27"/>
    </source>
</evidence>
<evidence type="ECO:0007829" key="35">
    <source>
        <dbReference type="PDB" id="1EQU"/>
    </source>
</evidence>
<evidence type="ECO:0007829" key="36">
    <source>
        <dbReference type="PDB" id="1JTV"/>
    </source>
</evidence>
<proteinExistence type="evidence at protein level"/>
<accession>P14061</accession>
<accession>B3KXS1</accession>
<accession>Q2M2L8</accession>
<sequence>MARTVVLITGCSSGIGLHLAVRLASDPSQSFKVYATLRDLKTQGRLWEAARALACPPGSLETLQLDVRDSKSVAAARERVTEGRVDVLVCNAGLGLLGPLEALGEDAVASVLDVNVVGTVRMLQAFLPDMKRRGSGRVLVTGSVGGLMGLPFNDVYCASKFALEGLCESLAVLLLPFGVHLSLIECGPVHTAFMEKVLGSPEEVLDRTDIHTFHRFYQYLAHSKQVFREAAQNPEEVAEVFLTALRAPKPTLRYFTTERFLPLLRMRLDDPSGSNYVTAMHREVFGDVPAKAEAGAEAGGGAGPGAEDEAGRGAVGDPELGDPPAAPQ</sequence>
<comment type="function">
    <text evidence="14">Favors the reduction of estrogens and androgens. Converts estrone (E1) to a more potent estrogen, 17beta-estradiol (E2) (PubMed:8994190). Also has 20-alpha-HSD activity. Uses preferentially NADH.</text>
</comment>
<comment type="catalytic activity">
    <reaction evidence="14">
        <text>17beta-estradiol + NAD(+) = estrone + NADH + H(+)</text>
        <dbReference type="Rhea" id="RHEA:24612"/>
        <dbReference type="ChEBI" id="CHEBI:15378"/>
        <dbReference type="ChEBI" id="CHEBI:16469"/>
        <dbReference type="ChEBI" id="CHEBI:17263"/>
        <dbReference type="ChEBI" id="CHEBI:57540"/>
        <dbReference type="ChEBI" id="CHEBI:57945"/>
        <dbReference type="EC" id="1.1.1.62"/>
    </reaction>
</comment>
<comment type="catalytic activity">
    <reaction evidence="1">
        <text>17beta-estradiol + NADP(+) = estrone + NADPH + H(+)</text>
        <dbReference type="Rhea" id="RHEA:24616"/>
        <dbReference type="ChEBI" id="CHEBI:15378"/>
        <dbReference type="ChEBI" id="CHEBI:16469"/>
        <dbReference type="ChEBI" id="CHEBI:17263"/>
        <dbReference type="ChEBI" id="CHEBI:57783"/>
        <dbReference type="ChEBI" id="CHEBI:58349"/>
        <dbReference type="EC" id="1.1.1.62"/>
    </reaction>
    <physiologicalReaction direction="right-to-left" evidence="1">
        <dbReference type="Rhea" id="RHEA:24618"/>
    </physiologicalReaction>
</comment>
<comment type="catalytic activity">
    <reaction evidence="1">
        <text>testosterone + NADP(+) = androst-4-ene-3,17-dione + NADPH + H(+)</text>
        <dbReference type="Rhea" id="RHEA:14981"/>
        <dbReference type="ChEBI" id="CHEBI:15378"/>
        <dbReference type="ChEBI" id="CHEBI:16422"/>
        <dbReference type="ChEBI" id="CHEBI:17347"/>
        <dbReference type="ChEBI" id="CHEBI:57783"/>
        <dbReference type="ChEBI" id="CHEBI:58349"/>
        <dbReference type="EC" id="1.1.1.51"/>
    </reaction>
    <physiologicalReaction direction="right-to-left" evidence="1">
        <dbReference type="Rhea" id="RHEA:14983"/>
    </physiologicalReaction>
</comment>
<comment type="biophysicochemical properties">
    <kinetics>
        <KM evidence="14">2.11 uM for 17beta-estradiol</KM>
        <KM evidence="14">0.9 uM for estrone</KM>
    </kinetics>
</comment>
<comment type="pathway">
    <text evidence="14">Steroid biosynthesis; estrogen biosynthesis.</text>
</comment>
<comment type="subunit">
    <text evidence="13 14">Homodimer. Exists predominantly as a homodimer but also exits as monomer.</text>
</comment>
<comment type="interaction">
    <interactant intactId="EBI-12867244">
        <id>P14061</id>
    </interactant>
    <interactant intactId="EBI-79934">
        <id>P09917</id>
        <label>ALOX5</label>
    </interactant>
    <organismsDiffer>false</organismsDiffer>
    <experiments>3</experiments>
</comment>
<comment type="subcellular location">
    <subcellularLocation>
        <location>Cytoplasm</location>
    </subcellularLocation>
</comment>
<comment type="similarity">
    <text evidence="17">Belongs to the short-chain dehydrogenases/reductases (SDR) family.</text>
</comment>